<protein>
    <recommendedName>
        <fullName>Leaf-specific thionin</fullName>
    </recommendedName>
</protein>
<accession>P09617</accession>
<evidence type="ECO:0000250" key="1">
    <source>
        <dbReference type="UniProtKB" id="P60057"/>
    </source>
</evidence>
<evidence type="ECO:0000255" key="2"/>
<evidence type="ECO:0000305" key="3"/>
<organism>
    <name type="scientific">Hordeum vulgare</name>
    <name type="common">Barley</name>
    <dbReference type="NCBI Taxonomy" id="4513"/>
    <lineage>
        <taxon>Eukaryota</taxon>
        <taxon>Viridiplantae</taxon>
        <taxon>Streptophyta</taxon>
        <taxon>Embryophyta</taxon>
        <taxon>Tracheophyta</taxon>
        <taxon>Spermatophyta</taxon>
        <taxon>Magnoliopsida</taxon>
        <taxon>Liliopsida</taxon>
        <taxon>Poales</taxon>
        <taxon>Poaceae</taxon>
        <taxon>BOP clade</taxon>
        <taxon>Pooideae</taxon>
        <taxon>Triticodae</taxon>
        <taxon>Triticeae</taxon>
        <taxon>Hordeinae</taxon>
        <taxon>Hordeum</taxon>
    </lineage>
</organism>
<comment type="function">
    <text>Thionins are small plant proteins which are toxic to animal cells. They seem to exert their toxic effect at the level of the cell membrane. Their precise function is not known.</text>
</comment>
<comment type="subcellular location">
    <subcellularLocation>
        <location evidence="3">Secreted</location>
    </subcellularLocation>
</comment>
<comment type="similarity">
    <text evidence="3">Belongs to the plant thionin (TC 1.C.44) family. 4 C-C subfamily.</text>
</comment>
<name>THN5_HORVU</name>
<gene>
    <name type="primary">THI1.5</name>
</gene>
<proteinExistence type="evidence at transcript level"/>
<dbReference type="EMBL" id="M19046">
    <property type="protein sequence ID" value="AAA32976.1"/>
    <property type="molecule type" value="mRNA"/>
</dbReference>
<dbReference type="EMBL" id="M19047">
    <property type="protein sequence ID" value="AAA32977.1"/>
    <property type="molecule type" value="mRNA"/>
</dbReference>
<dbReference type="EMBL" id="M19048">
    <property type="protein sequence ID" value="AAA32978.1"/>
    <property type="molecule type" value="mRNA"/>
</dbReference>
<dbReference type="PIR" id="S22515">
    <property type="entry name" value="S22515"/>
</dbReference>
<dbReference type="SMR" id="P09617"/>
<dbReference type="ExpressionAtlas" id="P09617">
    <property type="expression patterns" value="baseline"/>
</dbReference>
<dbReference type="GO" id="GO:0005576">
    <property type="term" value="C:extracellular region"/>
    <property type="evidence" value="ECO:0007669"/>
    <property type="project" value="UniProtKB-SubCell"/>
</dbReference>
<dbReference type="GO" id="GO:0090729">
    <property type="term" value="F:toxin activity"/>
    <property type="evidence" value="ECO:0007669"/>
    <property type="project" value="UniProtKB-KW"/>
</dbReference>
<dbReference type="GO" id="GO:0006952">
    <property type="term" value="P:defense response"/>
    <property type="evidence" value="ECO:0007669"/>
    <property type="project" value="UniProtKB-KW"/>
</dbReference>
<dbReference type="FunFam" id="3.30.1350.10:FF:000001">
    <property type="entry name" value="Hellethionin-D"/>
    <property type="match status" value="1"/>
</dbReference>
<dbReference type="Gene3D" id="3.30.1350.10">
    <property type="entry name" value="Thionin-like"/>
    <property type="match status" value="1"/>
</dbReference>
<dbReference type="InterPro" id="IPR001010">
    <property type="entry name" value="Thionin"/>
</dbReference>
<dbReference type="InterPro" id="IPR036391">
    <property type="entry name" value="Thionin-like_sf"/>
</dbReference>
<dbReference type="PANTHER" id="PTHR33920">
    <property type="entry name" value="THIONIN-2.1-RELATED"/>
    <property type="match status" value="1"/>
</dbReference>
<dbReference type="PANTHER" id="PTHR33920:SF2">
    <property type="entry name" value="THIONIN-2.1-RELATED"/>
    <property type="match status" value="1"/>
</dbReference>
<dbReference type="Pfam" id="PF00321">
    <property type="entry name" value="Thionin"/>
    <property type="match status" value="1"/>
</dbReference>
<dbReference type="PRINTS" id="PR00287">
    <property type="entry name" value="THIONIN"/>
</dbReference>
<dbReference type="SUPFAM" id="SSF57429">
    <property type="entry name" value="Crambin-like"/>
    <property type="match status" value="1"/>
</dbReference>
<dbReference type="PROSITE" id="PS00271">
    <property type="entry name" value="THIONIN"/>
    <property type="match status" value="1"/>
</dbReference>
<sequence>MATNKSIKSVVICVLILGLVLEQVQVEAKSCCKNTTGRNCYNACRFAGGSRPVCATACGCKIISGPTCPRDYPKLNLLPESGEPNATEYCTIGCRTSVCDNMDNVSRGQEMKFDMGLCSNACARFCNDGEVIQSVEA</sequence>
<keyword id="KW-1015">Disulfide bond</keyword>
<keyword id="KW-0611">Plant defense</keyword>
<keyword id="KW-0964">Secreted</keyword>
<keyword id="KW-0732">Signal</keyword>
<keyword id="KW-0800">Toxin</keyword>
<reference key="1">
    <citation type="journal article" date="1987" name="Planta">
        <title>Thionin genes specifically expressed in barley leaves.</title>
        <authorList>
            <person name="Gausing K."/>
        </authorList>
    </citation>
    <scope>NUCLEOTIDE SEQUENCE [MRNA]</scope>
</reference>
<reference key="2">
    <citation type="journal article" date="1992" name="Plant Mol. Biol.">
        <title>The identification of leaf thionin as one of the main jasmonate-induced proteins of barley (Hordeum vulgare).</title>
        <authorList>
            <person name="Andresen I."/>
            <person name="Becker W."/>
            <person name="Schluter K."/>
            <person name="Burges J."/>
            <person name="Parthier B."/>
            <person name="Apel K."/>
        </authorList>
    </citation>
    <scope>NUCLEOTIDE SEQUENCE [MRNA]</scope>
    <source>
        <strain>cv. Carina</strain>
    </source>
</reference>
<reference key="3">
    <citation type="journal article" date="1988" name="EMBO J.">
        <title>Leaf-specific thionins of barley - a novel class of cell wall proteins toxic to plant-pathogenic fungi and possibly involved in the defence mechanism of plants.</title>
        <authorList>
            <person name="Bohlmann H."/>
            <person name="Clausen S."/>
            <person name="Behnke S."/>
            <person name="Giese H."/>
            <person name="Hiller C."/>
            <person name="Reimann-Phillip U."/>
            <person name="Schrader G."/>
            <person name="Barkholt V."/>
            <person name="Apel K."/>
        </authorList>
    </citation>
    <scope>NUCLEOTIDE SEQUENCE [MRNA] OF 29-74</scope>
    <source>
        <strain>cv. Carina</strain>
    </source>
</reference>
<feature type="signal peptide" evidence="2">
    <location>
        <begin position="1"/>
        <end position="28"/>
    </location>
</feature>
<feature type="chain" id="PRO_0000034118" description="Leaf-specific thionin">
    <location>
        <begin position="29"/>
        <end position="74"/>
    </location>
</feature>
<feature type="propeptide" id="PRO_0000459412" description="Acidic domain" evidence="3">
    <location>
        <begin position="75"/>
        <end position="137"/>
    </location>
</feature>
<feature type="disulfide bond" evidence="1">
    <location>
        <begin position="31"/>
        <end position="68"/>
    </location>
</feature>
<feature type="disulfide bond" evidence="1">
    <location>
        <begin position="32"/>
        <end position="60"/>
    </location>
</feature>
<feature type="disulfide bond" evidence="1">
    <location>
        <begin position="40"/>
        <end position="58"/>
    </location>
</feature>
<feature type="disulfide bond" evidence="1">
    <location>
        <begin position="44"/>
        <end position="54"/>
    </location>
</feature>
<feature type="sequence conflict" description="In Ref. 2." evidence="3" ref="2">
    <original>A</original>
    <variation>G</variation>
    <location>
        <position position="28"/>
    </location>
</feature>
<feature type="sequence conflict" description="In Ref. 2." evidence="3" ref="2">
    <original>V</original>
    <variation>L</variation>
    <location>
        <position position="135"/>
    </location>
</feature>